<proteinExistence type="evidence at transcript level"/>
<accession>Q5BK54</accession>
<feature type="signal peptide" evidence="3">
    <location>
        <begin position="1"/>
        <end position="23"/>
    </location>
</feature>
<feature type="chain" id="PRO_0000253042" description="Lymphocyte activation gene 3 protein">
    <location>
        <begin position="24"/>
        <end position="525"/>
    </location>
</feature>
<feature type="chain" id="PRO_0000446644" description="Secreted lymphocyte activation gene 3 protein" evidence="2">
    <location>
        <begin position="24"/>
        <end status="unknown"/>
    </location>
</feature>
<feature type="topological domain" description="Extracellular" evidence="3">
    <location>
        <begin position="24"/>
        <end position="442"/>
    </location>
</feature>
<feature type="transmembrane region" description="Helical" evidence="3">
    <location>
        <begin position="443"/>
        <end position="463"/>
    </location>
</feature>
<feature type="topological domain" description="Cytoplasmic" evidence="3">
    <location>
        <begin position="464"/>
        <end position="525"/>
    </location>
</feature>
<feature type="domain" description="Ig-like V-type">
    <location>
        <begin position="37"/>
        <end position="163"/>
    </location>
</feature>
<feature type="domain" description="Ig-like C2-type 1">
    <location>
        <begin position="164"/>
        <end position="246"/>
    </location>
</feature>
<feature type="domain" description="Ig-like C2-type 2">
    <location>
        <begin position="258"/>
        <end position="341"/>
    </location>
</feature>
<feature type="domain" description="Ig-like C2-type 3">
    <location>
        <begin position="345"/>
        <end position="412"/>
    </location>
</feature>
<feature type="region of interest" description="Interaction with FGL1" evidence="1">
    <location>
        <begin position="37"/>
        <end position="246"/>
    </location>
</feature>
<feature type="region of interest" description="Connecting peptide" evidence="2">
    <location>
        <begin position="422"/>
        <end position="442"/>
    </location>
</feature>
<feature type="region of interest" description="Disordered" evidence="5">
    <location>
        <begin position="486"/>
        <end position="525"/>
    </location>
</feature>
<feature type="region of interest" description="15 X 2 AA tandem repeats of E-X">
    <location>
        <begin position="493"/>
        <end position="522"/>
    </location>
</feature>
<feature type="short sequence motif" description="KIEELE motif" evidence="2">
    <location>
        <begin position="490"/>
        <end position="495"/>
    </location>
</feature>
<feature type="compositionally biased region" description="Basic and acidic residues" evidence="5">
    <location>
        <begin position="490"/>
        <end position="499"/>
    </location>
</feature>
<feature type="compositionally biased region" description="Acidic residues" evidence="5">
    <location>
        <begin position="500"/>
        <end position="519"/>
    </location>
</feature>
<feature type="glycosylation site" description="N-linked (GlcNAc...) asparagine" evidence="3">
    <location>
        <position position="184"/>
    </location>
</feature>
<feature type="glycosylation site" description="N-linked (GlcNAc...) asparagine" evidence="3">
    <location>
        <position position="244"/>
    </location>
</feature>
<feature type="glycosylation site" description="N-linked (GlcNAc...) asparagine" evidence="3">
    <location>
        <position position="309"/>
    </location>
</feature>
<feature type="disulfide bond" evidence="4">
    <location>
        <begin position="44"/>
        <end position="156"/>
    </location>
</feature>
<feature type="disulfide bond" evidence="4">
    <location>
        <begin position="185"/>
        <end position="235"/>
    </location>
</feature>
<feature type="disulfide bond" evidence="4">
    <location>
        <begin position="276"/>
        <end position="327"/>
    </location>
</feature>
<feature type="disulfide bond" evidence="4">
    <location>
        <begin position="363"/>
        <end position="405"/>
    </location>
</feature>
<evidence type="ECO:0000250" key="1">
    <source>
        <dbReference type="UniProtKB" id="P18627"/>
    </source>
</evidence>
<evidence type="ECO:0000250" key="2">
    <source>
        <dbReference type="UniProtKB" id="Q61790"/>
    </source>
</evidence>
<evidence type="ECO:0000255" key="3"/>
<evidence type="ECO:0000255" key="4">
    <source>
        <dbReference type="PROSITE-ProRule" id="PRU00114"/>
    </source>
</evidence>
<evidence type="ECO:0000256" key="5">
    <source>
        <dbReference type="SAM" id="MobiDB-lite"/>
    </source>
</evidence>
<evidence type="ECO:0000305" key="6"/>
<sequence>MRQDLFLDLLLLQLLWEAPVVSSGPGKELSVVWAQEGAPVHLPCSLEFPHLDPNFLRRGWVTWQHRPDSDQPASIPALDLLQGMPSTRRHPPHRYTVLSVAPGGLRSGRQPLLSHVQLEKRGPQRGDFSLWLRPATRKDAGEYHAFVRLPDRDFSCSLRLRVGQASMIASPPGTLKPSDWVILNCSFSRPDRPVSVHWFQGQSRVPVHNSPRHYLAESFLLLPQVSPLDSGTWGCVLTYRDGFNVSITYNLKVQGLEPVAPLTVYAAEGSRVELPCHLPPVVGTPSLLIAKWTPPGGGPELPVTGKSGNFTLQLENVGRAQAGTYTCSIHLQGRQLSAAVTLAVITVTPKSFGLPGSPQKLLCEVVPASGEGRFVWRPLSDLSRSSLGPVLELQEAKLLAEQWQCQLYEGQKLLGATVYTAESSSGAWSAKRISGDLKGGHLFLSLILGALALFLLVTGAFGFHLWRRQLLRRRFSALEHGIRPPPVQSKIEELEREPETEMEPETEPDPEPQPEPELEPESRQL</sequence>
<dbReference type="EMBL" id="DQ438937">
    <property type="protein sequence ID" value="ABE68618.1"/>
    <property type="molecule type" value="mRNA"/>
</dbReference>
<dbReference type="EMBL" id="BC091201">
    <property type="protein sequence ID" value="AAH91201.1"/>
    <property type="molecule type" value="mRNA"/>
</dbReference>
<dbReference type="RefSeq" id="NP_997678.2">
    <property type="nucleotide sequence ID" value="NM_212513.2"/>
</dbReference>
<dbReference type="RefSeq" id="XP_008761504.1">
    <property type="nucleotide sequence ID" value="XM_008763282.2"/>
</dbReference>
<dbReference type="RefSeq" id="XP_038963379.1">
    <property type="nucleotide sequence ID" value="XM_039107451.2"/>
</dbReference>
<dbReference type="SMR" id="Q5BK54"/>
<dbReference type="FunCoup" id="Q5BK54">
    <property type="interactions" value="26"/>
</dbReference>
<dbReference type="STRING" id="10116.ENSRNOP00000036771"/>
<dbReference type="GlyCosmos" id="Q5BK54">
    <property type="glycosylation" value="3 sites, No reported glycans"/>
</dbReference>
<dbReference type="GlyGen" id="Q5BK54">
    <property type="glycosylation" value="3 sites"/>
</dbReference>
<dbReference type="PhosphoSitePlus" id="Q5BK54"/>
<dbReference type="PaxDb" id="10116-ENSRNOP00000036771"/>
<dbReference type="Ensembl" id="ENSRNOT00000028965.6">
    <property type="protein sequence ID" value="ENSRNOP00000036771.4"/>
    <property type="gene ID" value="ENSRNOG00000021334.6"/>
</dbReference>
<dbReference type="GeneID" id="297596"/>
<dbReference type="KEGG" id="rno:297596"/>
<dbReference type="UCSC" id="RGD:1302990">
    <property type="organism name" value="rat"/>
</dbReference>
<dbReference type="AGR" id="RGD:1302990"/>
<dbReference type="CTD" id="3902"/>
<dbReference type="RGD" id="1302990">
    <property type="gene designation" value="Lag3"/>
</dbReference>
<dbReference type="eggNOG" id="ENOG502S2HD">
    <property type="taxonomic scope" value="Eukaryota"/>
</dbReference>
<dbReference type="GeneTree" id="ENSGT01090000259985"/>
<dbReference type="HOGENOM" id="CLU_041154_1_0_1"/>
<dbReference type="InParanoid" id="Q5BK54"/>
<dbReference type="OMA" id="LWVAPVE"/>
<dbReference type="OrthoDB" id="9937043at2759"/>
<dbReference type="PhylomeDB" id="Q5BK54"/>
<dbReference type="TreeFam" id="TF335942"/>
<dbReference type="Reactome" id="R-RNO-2132295">
    <property type="pathway name" value="MHC class II antigen presentation"/>
</dbReference>
<dbReference type="PRO" id="PR:Q5BK54"/>
<dbReference type="Proteomes" id="UP000002494">
    <property type="component" value="Chromosome 4"/>
</dbReference>
<dbReference type="Bgee" id="ENSRNOG00000021334">
    <property type="expression patterns" value="Expressed in thymus and 14 other cell types or tissues"/>
</dbReference>
<dbReference type="GO" id="GO:0009986">
    <property type="term" value="C:cell surface"/>
    <property type="evidence" value="ECO:0000318"/>
    <property type="project" value="GO_Central"/>
</dbReference>
<dbReference type="GO" id="GO:0009897">
    <property type="term" value="C:external side of plasma membrane"/>
    <property type="evidence" value="ECO:0000266"/>
    <property type="project" value="RGD"/>
</dbReference>
<dbReference type="GO" id="GO:0005576">
    <property type="term" value="C:extracellular region"/>
    <property type="evidence" value="ECO:0000266"/>
    <property type="project" value="RGD"/>
</dbReference>
<dbReference type="GO" id="GO:0005886">
    <property type="term" value="C:plasma membrane"/>
    <property type="evidence" value="ECO:0000318"/>
    <property type="project" value="GO_Central"/>
</dbReference>
<dbReference type="GO" id="GO:0042289">
    <property type="term" value="F:MHC class II protein binding"/>
    <property type="evidence" value="ECO:0000266"/>
    <property type="project" value="RGD"/>
</dbReference>
<dbReference type="GO" id="GO:0004888">
    <property type="term" value="F:transmembrane signaling receptor activity"/>
    <property type="evidence" value="ECO:0000266"/>
    <property type="project" value="RGD"/>
</dbReference>
<dbReference type="GO" id="GO:0002250">
    <property type="term" value="P:adaptive immune response"/>
    <property type="evidence" value="ECO:0007669"/>
    <property type="project" value="UniProtKB-KW"/>
</dbReference>
<dbReference type="GO" id="GO:0007166">
    <property type="term" value="P:cell surface receptor signaling pathway"/>
    <property type="evidence" value="ECO:0000250"/>
    <property type="project" value="UniProtKB"/>
</dbReference>
<dbReference type="GO" id="GO:0045087">
    <property type="term" value="P:innate immune response"/>
    <property type="evidence" value="ECO:0000318"/>
    <property type="project" value="GO_Central"/>
</dbReference>
<dbReference type="GO" id="GO:0042267">
    <property type="term" value="P:natural killer cell mediated cytotoxicity"/>
    <property type="evidence" value="ECO:0000266"/>
    <property type="project" value="RGD"/>
</dbReference>
<dbReference type="GO" id="GO:0032703">
    <property type="term" value="P:negative regulation of interleukin-2 production"/>
    <property type="evidence" value="ECO:0000266"/>
    <property type="project" value="RGD"/>
</dbReference>
<dbReference type="GO" id="GO:0045590">
    <property type="term" value="P:negative regulation of regulatory T cell differentiation"/>
    <property type="evidence" value="ECO:0000250"/>
    <property type="project" value="UniProtKB"/>
</dbReference>
<dbReference type="GO" id="GO:0050868">
    <property type="term" value="P:negative regulation of T cell activation"/>
    <property type="evidence" value="ECO:0000266"/>
    <property type="project" value="RGD"/>
</dbReference>
<dbReference type="GO" id="GO:0002270">
    <property type="term" value="P:plasmacytoid dendritic cell activation"/>
    <property type="evidence" value="ECO:0000250"/>
    <property type="project" value="UniProtKB"/>
</dbReference>
<dbReference type="GO" id="GO:0045954">
    <property type="term" value="P:positive regulation of natural killer cell mediated cytotoxicity"/>
    <property type="evidence" value="ECO:0000266"/>
    <property type="project" value="RGD"/>
</dbReference>
<dbReference type="GO" id="GO:0050776">
    <property type="term" value="P:regulation of immune response"/>
    <property type="evidence" value="ECO:0000250"/>
    <property type="project" value="UniProtKB"/>
</dbReference>
<dbReference type="GO" id="GO:0042110">
    <property type="term" value="P:T cell activation"/>
    <property type="evidence" value="ECO:0000266"/>
    <property type="project" value="RGD"/>
</dbReference>
<dbReference type="CDD" id="cd00096">
    <property type="entry name" value="Ig"/>
    <property type="match status" value="1"/>
</dbReference>
<dbReference type="FunFam" id="2.60.40.10:FF:002440">
    <property type="entry name" value="Lymphocyte activation gene 3 protein"/>
    <property type="match status" value="1"/>
</dbReference>
<dbReference type="FunFam" id="2.60.40.10:FF:002804">
    <property type="entry name" value="lymphocyte activation gene 3 protein"/>
    <property type="match status" value="1"/>
</dbReference>
<dbReference type="Gene3D" id="2.60.40.10">
    <property type="entry name" value="Immunoglobulins"/>
    <property type="match status" value="3"/>
</dbReference>
<dbReference type="InterPro" id="IPR007110">
    <property type="entry name" value="Ig-like_dom"/>
</dbReference>
<dbReference type="InterPro" id="IPR036179">
    <property type="entry name" value="Ig-like_dom_sf"/>
</dbReference>
<dbReference type="InterPro" id="IPR013783">
    <property type="entry name" value="Ig-like_fold"/>
</dbReference>
<dbReference type="InterPro" id="IPR003599">
    <property type="entry name" value="Ig_sub"/>
</dbReference>
<dbReference type="InterPro" id="IPR003598">
    <property type="entry name" value="Ig_sub2"/>
</dbReference>
<dbReference type="InterPro" id="IPR015621">
    <property type="entry name" value="IL-1_rcpt_fam"/>
</dbReference>
<dbReference type="InterPro" id="IPR013151">
    <property type="entry name" value="Immunoglobulin_dom"/>
</dbReference>
<dbReference type="PANTHER" id="PTHR11890">
    <property type="entry name" value="INTERLEUKIN-1 RECEPTOR FAMILY MEMBER"/>
    <property type="match status" value="1"/>
</dbReference>
<dbReference type="PANTHER" id="PTHR11890:SF18">
    <property type="entry name" value="LYMPHOCYTE ACTIVATION GENE 3 PROTEIN"/>
    <property type="match status" value="1"/>
</dbReference>
<dbReference type="Pfam" id="PF00047">
    <property type="entry name" value="ig"/>
    <property type="match status" value="1"/>
</dbReference>
<dbReference type="Pfam" id="PF13895">
    <property type="entry name" value="Ig_2"/>
    <property type="match status" value="1"/>
</dbReference>
<dbReference type="SMART" id="SM00409">
    <property type="entry name" value="IG"/>
    <property type="match status" value="3"/>
</dbReference>
<dbReference type="SMART" id="SM00408">
    <property type="entry name" value="IGc2"/>
    <property type="match status" value="2"/>
</dbReference>
<dbReference type="SUPFAM" id="SSF48726">
    <property type="entry name" value="Immunoglobulin"/>
    <property type="match status" value="3"/>
</dbReference>
<dbReference type="PROSITE" id="PS50835">
    <property type="entry name" value="IG_LIKE"/>
    <property type="match status" value="2"/>
</dbReference>
<name>LAG3_RAT</name>
<comment type="function">
    <text evidence="2">Lymphocyte activation gene 3 protein: Inhibitory receptor on antigen activated T-cells. Delivers inhibitory signals upon binding to ligands, such as FGL1. FGL1 constitutes a major ligand of LAG3 and is responsible for LAG3 T-cell inhibitory function. Following TCR engagement, LAG3 associates with CD3-TCR in the immunological synapse and directly inhibits T-cell activation. May inhibit antigen-specific T-cell activation in synergy with PDCD1/PD-1, possibly by acting as a coreceptor for PDCD1/PD-1. Negatively regulates the proliferation, activation, effector function and homeostasis of both CD8(+) and CD4(+) T-cells. Also mediates immune tolerance: constitutively expressed on a subset of regulatory T-cells (Tregs) and contributes to their suppressive function. Also acts as a negative regulator of plasmacytoid dendritic cell (pDCs) activation. Binds MHC class II (MHC-II); the precise role of MHC-II-binding is however unclear.</text>
</comment>
<comment type="function">
    <molecule>Secreted lymphocyte activation gene 3 protein</molecule>
    <text evidence="2">May function as a ligand for MHC class II (MHC-II) on antigen-presenting cells (APC), promoting APC activation/maturation and driving Th1 immune response.</text>
</comment>
<comment type="subunit">
    <text evidence="2">Interacts with MHC class II (MHC-II); selectively recognizes stable complexes of peptide and MHC-II. Interacts with FGL1 (via the Fibrinogen C-terminal domain).</text>
</comment>
<comment type="subcellular location">
    <molecule>Lymphocyte activation gene 3 protein</molecule>
    <subcellularLocation>
        <location evidence="2">Cell membrane</location>
        <topology evidence="3">Single-pass type I membrane protein</topology>
    </subcellularLocation>
</comment>
<comment type="subcellular location">
    <molecule>Secreted lymphocyte activation gene 3 protein</molecule>
    <subcellularLocation>
        <location evidence="2">Secreted</location>
    </subcellularLocation>
    <text evidence="2">Produced following cleavage of the main chain.</text>
</comment>
<comment type="domain">
    <molecule>Lymphocyte activation gene 3 protein</molecule>
    <text evidence="2">The KIEELE motif is required for interaction with downstream signaling molecules.</text>
</comment>
<comment type="PTM">
    <molecule>Lymphocyte activation gene 3 protein</molecule>
    <text evidence="2">Proteolytically cleaved by ADAM10 and ADAM17 within the connecting peptide region, leading to release of Secreted lymphocyte activation gene 3 protein (sLAG-3). ADAM10 mediates constitutive cleavage, but cleavage increases following T-cell activation, whereas shedding by ADAM17 is induced by TCR signaling in a PRKCQ-dependent manner.</text>
</comment>
<comment type="similarity">
    <text evidence="6">Belongs to the LAG3 family.</text>
</comment>
<reference key="1">
    <citation type="submission" date="2006-03" db="EMBL/GenBank/DDBJ databases">
        <title>Coding sequence of rat LAG-3 (CD223), LEWIS.1W (RT1u) strain.</title>
        <authorList>
            <person name="Haudebourg T."/>
            <person name="Coulon F."/>
            <person name="Vanhove B."/>
        </authorList>
    </citation>
    <scope>NUCLEOTIDE SEQUENCE [MRNA]</scope>
    <source>
        <strain>Lewis.1W</strain>
    </source>
</reference>
<reference key="2">
    <citation type="journal article" date="2004" name="Genome Res.">
        <title>The status, quality, and expansion of the NIH full-length cDNA project: the Mammalian Gene Collection (MGC).</title>
        <authorList>
            <consortium name="The MGC Project Team"/>
        </authorList>
    </citation>
    <scope>NUCLEOTIDE SEQUENCE [LARGE SCALE MRNA]</scope>
    <source>
        <tissue>Thymus</tissue>
    </source>
</reference>
<keyword id="KW-1064">Adaptive immunity</keyword>
<keyword id="KW-1003">Cell membrane</keyword>
<keyword id="KW-1015">Disulfide bond</keyword>
<keyword id="KW-0325">Glycoprotein</keyword>
<keyword id="KW-0391">Immunity</keyword>
<keyword id="KW-0393">Immunoglobulin domain</keyword>
<keyword id="KW-0472">Membrane</keyword>
<keyword id="KW-1185">Reference proteome</keyword>
<keyword id="KW-0677">Repeat</keyword>
<keyword id="KW-0964">Secreted</keyword>
<keyword id="KW-0732">Signal</keyword>
<keyword id="KW-0812">Transmembrane</keyword>
<keyword id="KW-1133">Transmembrane helix</keyword>
<protein>
    <recommendedName>
        <fullName>Lymphocyte activation gene 3 protein</fullName>
        <shortName>LAG-3</shortName>
    </recommendedName>
    <cdAntigenName>CD223</cdAntigenName>
    <component>
        <recommendedName>
            <fullName evidence="6">Secreted lymphocyte activation gene 3 protein</fullName>
            <shortName evidence="2">sLAG-3</shortName>
        </recommendedName>
    </component>
</protein>
<gene>
    <name type="primary">Lag3</name>
</gene>
<organism>
    <name type="scientific">Rattus norvegicus</name>
    <name type="common">Rat</name>
    <dbReference type="NCBI Taxonomy" id="10116"/>
    <lineage>
        <taxon>Eukaryota</taxon>
        <taxon>Metazoa</taxon>
        <taxon>Chordata</taxon>
        <taxon>Craniata</taxon>
        <taxon>Vertebrata</taxon>
        <taxon>Euteleostomi</taxon>
        <taxon>Mammalia</taxon>
        <taxon>Eutheria</taxon>
        <taxon>Euarchontoglires</taxon>
        <taxon>Glires</taxon>
        <taxon>Rodentia</taxon>
        <taxon>Myomorpha</taxon>
        <taxon>Muroidea</taxon>
        <taxon>Muridae</taxon>
        <taxon>Murinae</taxon>
        <taxon>Rattus</taxon>
    </lineage>
</organism>